<gene>
    <name evidence="1" type="primary">rplQ</name>
    <name type="ordered locus">XAC0997</name>
</gene>
<organism>
    <name type="scientific">Xanthomonas axonopodis pv. citri (strain 306)</name>
    <dbReference type="NCBI Taxonomy" id="190486"/>
    <lineage>
        <taxon>Bacteria</taxon>
        <taxon>Pseudomonadati</taxon>
        <taxon>Pseudomonadota</taxon>
        <taxon>Gammaproteobacteria</taxon>
        <taxon>Lysobacterales</taxon>
        <taxon>Lysobacteraceae</taxon>
        <taxon>Xanthomonas</taxon>
    </lineage>
</organism>
<feature type="chain" id="PRO_0000267969" description="Large ribosomal subunit protein bL17">
    <location>
        <begin position="1"/>
        <end position="127"/>
    </location>
</feature>
<evidence type="ECO:0000255" key="1">
    <source>
        <dbReference type="HAMAP-Rule" id="MF_01368"/>
    </source>
</evidence>
<evidence type="ECO:0000305" key="2"/>
<sequence>MRHQKSGRKFNRTSAHREAMFRNMAASLFKHELIKTTLPKAKELRRVAEPLITIGKVDGVANRRLAFARLRDKEAVGKLFVELGPRYATRPGGYLRILKAGFRAGDNAPMAYVELVDRPVVAEEVAE</sequence>
<comment type="subunit">
    <text evidence="1">Part of the 50S ribosomal subunit. Contacts protein L32.</text>
</comment>
<comment type="similarity">
    <text evidence="1">Belongs to the bacterial ribosomal protein bL17 family.</text>
</comment>
<keyword id="KW-0687">Ribonucleoprotein</keyword>
<keyword id="KW-0689">Ribosomal protein</keyword>
<protein>
    <recommendedName>
        <fullName evidence="1">Large ribosomal subunit protein bL17</fullName>
    </recommendedName>
    <alternativeName>
        <fullName evidence="2">50S ribosomal protein L17</fullName>
    </alternativeName>
</protein>
<dbReference type="EMBL" id="AE008923">
    <property type="protein sequence ID" value="AAM35880.1"/>
    <property type="molecule type" value="Genomic_DNA"/>
</dbReference>
<dbReference type="RefSeq" id="WP_003486665.1">
    <property type="nucleotide sequence ID" value="NC_003919.1"/>
</dbReference>
<dbReference type="SMR" id="Q8PNQ7"/>
<dbReference type="GeneID" id="97509361"/>
<dbReference type="KEGG" id="xac:XAC0997"/>
<dbReference type="eggNOG" id="COG0203">
    <property type="taxonomic scope" value="Bacteria"/>
</dbReference>
<dbReference type="HOGENOM" id="CLU_074407_2_0_6"/>
<dbReference type="Proteomes" id="UP000000576">
    <property type="component" value="Chromosome"/>
</dbReference>
<dbReference type="GO" id="GO:0022625">
    <property type="term" value="C:cytosolic large ribosomal subunit"/>
    <property type="evidence" value="ECO:0007669"/>
    <property type="project" value="TreeGrafter"/>
</dbReference>
<dbReference type="GO" id="GO:0003735">
    <property type="term" value="F:structural constituent of ribosome"/>
    <property type="evidence" value="ECO:0007669"/>
    <property type="project" value="InterPro"/>
</dbReference>
<dbReference type="GO" id="GO:0006412">
    <property type="term" value="P:translation"/>
    <property type="evidence" value="ECO:0007669"/>
    <property type="project" value="UniProtKB-UniRule"/>
</dbReference>
<dbReference type="FunFam" id="3.90.1030.10:FF:000001">
    <property type="entry name" value="50S ribosomal protein L17"/>
    <property type="match status" value="1"/>
</dbReference>
<dbReference type="Gene3D" id="3.90.1030.10">
    <property type="entry name" value="Ribosomal protein L17"/>
    <property type="match status" value="1"/>
</dbReference>
<dbReference type="HAMAP" id="MF_01368">
    <property type="entry name" value="Ribosomal_bL17"/>
    <property type="match status" value="1"/>
</dbReference>
<dbReference type="InterPro" id="IPR000456">
    <property type="entry name" value="Ribosomal_bL17"/>
</dbReference>
<dbReference type="InterPro" id="IPR047859">
    <property type="entry name" value="Ribosomal_bL17_CS"/>
</dbReference>
<dbReference type="InterPro" id="IPR036373">
    <property type="entry name" value="Ribosomal_bL17_sf"/>
</dbReference>
<dbReference type="NCBIfam" id="TIGR00059">
    <property type="entry name" value="L17"/>
    <property type="match status" value="1"/>
</dbReference>
<dbReference type="PANTHER" id="PTHR14413:SF16">
    <property type="entry name" value="LARGE RIBOSOMAL SUBUNIT PROTEIN BL17M"/>
    <property type="match status" value="1"/>
</dbReference>
<dbReference type="PANTHER" id="PTHR14413">
    <property type="entry name" value="RIBOSOMAL PROTEIN L17"/>
    <property type="match status" value="1"/>
</dbReference>
<dbReference type="Pfam" id="PF01196">
    <property type="entry name" value="Ribosomal_L17"/>
    <property type="match status" value="1"/>
</dbReference>
<dbReference type="SUPFAM" id="SSF64263">
    <property type="entry name" value="Prokaryotic ribosomal protein L17"/>
    <property type="match status" value="1"/>
</dbReference>
<dbReference type="PROSITE" id="PS01167">
    <property type="entry name" value="RIBOSOMAL_L17"/>
    <property type="match status" value="1"/>
</dbReference>
<reference key="1">
    <citation type="journal article" date="2002" name="Nature">
        <title>Comparison of the genomes of two Xanthomonas pathogens with differing host specificities.</title>
        <authorList>
            <person name="da Silva A.C.R."/>
            <person name="Ferro J.A."/>
            <person name="Reinach F.C."/>
            <person name="Farah C.S."/>
            <person name="Furlan L.R."/>
            <person name="Quaggio R.B."/>
            <person name="Monteiro-Vitorello C.B."/>
            <person name="Van Sluys M.A."/>
            <person name="Almeida N.F. Jr."/>
            <person name="Alves L.M.C."/>
            <person name="do Amaral A.M."/>
            <person name="Bertolini M.C."/>
            <person name="Camargo L.E.A."/>
            <person name="Camarotte G."/>
            <person name="Cannavan F."/>
            <person name="Cardozo J."/>
            <person name="Chambergo F."/>
            <person name="Ciapina L.P."/>
            <person name="Cicarelli R.M.B."/>
            <person name="Coutinho L.L."/>
            <person name="Cursino-Santos J.R."/>
            <person name="El-Dorry H."/>
            <person name="Faria J.B."/>
            <person name="Ferreira A.J.S."/>
            <person name="Ferreira R.C.C."/>
            <person name="Ferro M.I.T."/>
            <person name="Formighieri E.F."/>
            <person name="Franco M.C."/>
            <person name="Greggio C.C."/>
            <person name="Gruber A."/>
            <person name="Katsuyama A.M."/>
            <person name="Kishi L.T."/>
            <person name="Leite R.P."/>
            <person name="Lemos E.G.M."/>
            <person name="Lemos M.V.F."/>
            <person name="Locali E.C."/>
            <person name="Machado M.A."/>
            <person name="Madeira A.M.B.N."/>
            <person name="Martinez-Rossi N.M."/>
            <person name="Martins E.C."/>
            <person name="Meidanis J."/>
            <person name="Menck C.F.M."/>
            <person name="Miyaki C.Y."/>
            <person name="Moon D.H."/>
            <person name="Moreira L.M."/>
            <person name="Novo M.T.M."/>
            <person name="Okura V.K."/>
            <person name="Oliveira M.C."/>
            <person name="Oliveira V.R."/>
            <person name="Pereira H.A."/>
            <person name="Rossi A."/>
            <person name="Sena J.A.D."/>
            <person name="Silva C."/>
            <person name="de Souza R.F."/>
            <person name="Spinola L.A.F."/>
            <person name="Takita M.A."/>
            <person name="Tamura R.E."/>
            <person name="Teixeira E.C."/>
            <person name="Tezza R.I.D."/>
            <person name="Trindade dos Santos M."/>
            <person name="Truffi D."/>
            <person name="Tsai S.M."/>
            <person name="White F.F."/>
            <person name="Setubal J.C."/>
            <person name="Kitajima J.P."/>
        </authorList>
    </citation>
    <scope>NUCLEOTIDE SEQUENCE [LARGE SCALE GENOMIC DNA]</scope>
    <source>
        <strain>306</strain>
    </source>
</reference>
<name>RL17_XANAC</name>
<accession>Q8PNQ7</accession>
<proteinExistence type="inferred from homology"/>